<name>ACCD_PROMS</name>
<proteinExistence type="inferred from homology"/>
<sequence>MSLIDWFAARRKDQFVGKVSQDTDEGDGLWVKCSECSQVAYRKDLISNFNVCNNCGHHNRINSDERINIIADKNSFKEFDSLLSPTDPLGFKDRRAYADRIKESQAGTGLRDGVVTGICSVNSMPLALAVMDFRFMGGSMGSVVGEKITRIIERATLENFPILIVCASGGARMQEGMLSLMQMAKISGALKKHKEKNLLYMPLLTHPTTGGVTASFAMLGDLILAEPKALIGFAGRRVIEQTLREKLPDNFQTAEYLLEHGFVDVIVKRKDLKDTLTKILKIHGVKELAEANT</sequence>
<accession>A2BQS1</accession>
<gene>
    <name evidence="1" type="primary">accD</name>
    <name type="ordered locus">A9601_08481</name>
</gene>
<feature type="chain" id="PRO_0000359018" description="Acetyl-coenzyme A carboxylase carboxyl transferase subunit beta">
    <location>
        <begin position="1"/>
        <end position="293"/>
    </location>
</feature>
<feature type="domain" description="CoA carboxyltransferase N-terminal" evidence="2">
    <location>
        <begin position="29"/>
        <end position="293"/>
    </location>
</feature>
<feature type="zinc finger region" description="C4-type" evidence="1">
    <location>
        <begin position="33"/>
        <end position="55"/>
    </location>
</feature>
<feature type="binding site" evidence="1">
    <location>
        <position position="33"/>
    </location>
    <ligand>
        <name>Zn(2+)</name>
        <dbReference type="ChEBI" id="CHEBI:29105"/>
    </ligand>
</feature>
<feature type="binding site" evidence="1">
    <location>
        <position position="36"/>
    </location>
    <ligand>
        <name>Zn(2+)</name>
        <dbReference type="ChEBI" id="CHEBI:29105"/>
    </ligand>
</feature>
<feature type="binding site" evidence="1">
    <location>
        <position position="52"/>
    </location>
    <ligand>
        <name>Zn(2+)</name>
        <dbReference type="ChEBI" id="CHEBI:29105"/>
    </ligand>
</feature>
<feature type="binding site" evidence="1">
    <location>
        <position position="55"/>
    </location>
    <ligand>
        <name>Zn(2+)</name>
        <dbReference type="ChEBI" id="CHEBI:29105"/>
    </ligand>
</feature>
<dbReference type="EC" id="2.1.3.15" evidence="1"/>
<dbReference type="EMBL" id="CP000551">
    <property type="protein sequence ID" value="ABM70132.1"/>
    <property type="molecule type" value="Genomic_DNA"/>
</dbReference>
<dbReference type="RefSeq" id="WP_011818290.1">
    <property type="nucleotide sequence ID" value="NC_008816.1"/>
</dbReference>
<dbReference type="SMR" id="A2BQS1"/>
<dbReference type="STRING" id="146891.A9601_08481"/>
<dbReference type="KEGG" id="pmb:A9601_08481"/>
<dbReference type="eggNOG" id="COG0777">
    <property type="taxonomic scope" value="Bacteria"/>
</dbReference>
<dbReference type="HOGENOM" id="CLU_015486_1_1_3"/>
<dbReference type="OrthoDB" id="9772975at2"/>
<dbReference type="UniPathway" id="UPA00655">
    <property type="reaction ID" value="UER00711"/>
</dbReference>
<dbReference type="Proteomes" id="UP000002590">
    <property type="component" value="Chromosome"/>
</dbReference>
<dbReference type="GO" id="GO:0009317">
    <property type="term" value="C:acetyl-CoA carboxylase complex"/>
    <property type="evidence" value="ECO:0007669"/>
    <property type="project" value="InterPro"/>
</dbReference>
<dbReference type="GO" id="GO:0003989">
    <property type="term" value="F:acetyl-CoA carboxylase activity"/>
    <property type="evidence" value="ECO:0007669"/>
    <property type="project" value="InterPro"/>
</dbReference>
<dbReference type="GO" id="GO:0005524">
    <property type="term" value="F:ATP binding"/>
    <property type="evidence" value="ECO:0007669"/>
    <property type="project" value="UniProtKB-KW"/>
</dbReference>
<dbReference type="GO" id="GO:0016743">
    <property type="term" value="F:carboxyl- or carbamoyltransferase activity"/>
    <property type="evidence" value="ECO:0007669"/>
    <property type="project" value="UniProtKB-UniRule"/>
</dbReference>
<dbReference type="GO" id="GO:0008270">
    <property type="term" value="F:zinc ion binding"/>
    <property type="evidence" value="ECO:0007669"/>
    <property type="project" value="UniProtKB-UniRule"/>
</dbReference>
<dbReference type="GO" id="GO:0006633">
    <property type="term" value="P:fatty acid biosynthetic process"/>
    <property type="evidence" value="ECO:0007669"/>
    <property type="project" value="UniProtKB-KW"/>
</dbReference>
<dbReference type="GO" id="GO:2001295">
    <property type="term" value="P:malonyl-CoA biosynthetic process"/>
    <property type="evidence" value="ECO:0007669"/>
    <property type="project" value="UniProtKB-UniRule"/>
</dbReference>
<dbReference type="Gene3D" id="3.90.226.10">
    <property type="entry name" value="2-enoyl-CoA Hydratase, Chain A, domain 1"/>
    <property type="match status" value="1"/>
</dbReference>
<dbReference type="HAMAP" id="MF_01395">
    <property type="entry name" value="AcetylCoA_CT_beta"/>
    <property type="match status" value="1"/>
</dbReference>
<dbReference type="InterPro" id="IPR034733">
    <property type="entry name" value="AcCoA_carboxyl_beta"/>
</dbReference>
<dbReference type="InterPro" id="IPR000438">
    <property type="entry name" value="Acetyl_CoA_COase_Trfase_b_su"/>
</dbReference>
<dbReference type="InterPro" id="IPR029045">
    <property type="entry name" value="ClpP/crotonase-like_dom_sf"/>
</dbReference>
<dbReference type="InterPro" id="IPR011762">
    <property type="entry name" value="COA_CT_N"/>
</dbReference>
<dbReference type="InterPro" id="IPR041010">
    <property type="entry name" value="Znf-ACC"/>
</dbReference>
<dbReference type="NCBIfam" id="TIGR00515">
    <property type="entry name" value="accD"/>
    <property type="match status" value="1"/>
</dbReference>
<dbReference type="PANTHER" id="PTHR42995">
    <property type="entry name" value="ACETYL-COENZYME A CARBOXYLASE CARBOXYL TRANSFERASE SUBUNIT BETA, CHLOROPLASTIC"/>
    <property type="match status" value="1"/>
</dbReference>
<dbReference type="PANTHER" id="PTHR42995:SF5">
    <property type="entry name" value="ACETYL-COENZYME A CARBOXYLASE CARBOXYL TRANSFERASE SUBUNIT BETA, CHLOROPLASTIC"/>
    <property type="match status" value="1"/>
</dbReference>
<dbReference type="Pfam" id="PF01039">
    <property type="entry name" value="Carboxyl_trans"/>
    <property type="match status" value="1"/>
</dbReference>
<dbReference type="Pfam" id="PF17848">
    <property type="entry name" value="Zn_ribbon_ACC"/>
    <property type="match status" value="1"/>
</dbReference>
<dbReference type="PRINTS" id="PR01070">
    <property type="entry name" value="ACCCTRFRASEB"/>
</dbReference>
<dbReference type="SUPFAM" id="SSF52096">
    <property type="entry name" value="ClpP/crotonase"/>
    <property type="match status" value="1"/>
</dbReference>
<dbReference type="PROSITE" id="PS50980">
    <property type="entry name" value="COA_CT_NTER"/>
    <property type="match status" value="1"/>
</dbReference>
<organism>
    <name type="scientific">Prochlorococcus marinus (strain AS9601)</name>
    <dbReference type="NCBI Taxonomy" id="146891"/>
    <lineage>
        <taxon>Bacteria</taxon>
        <taxon>Bacillati</taxon>
        <taxon>Cyanobacteriota</taxon>
        <taxon>Cyanophyceae</taxon>
        <taxon>Synechococcales</taxon>
        <taxon>Prochlorococcaceae</taxon>
        <taxon>Prochlorococcus</taxon>
    </lineage>
</organism>
<protein>
    <recommendedName>
        <fullName evidence="1">Acetyl-coenzyme A carboxylase carboxyl transferase subunit beta</fullName>
        <shortName evidence="1">ACCase subunit beta</shortName>
        <shortName evidence="1">Acetyl-CoA carboxylase carboxyltransferase subunit beta</shortName>
        <ecNumber evidence="1">2.1.3.15</ecNumber>
    </recommendedName>
</protein>
<reference key="1">
    <citation type="journal article" date="2007" name="PLoS Genet.">
        <title>Patterns and implications of gene gain and loss in the evolution of Prochlorococcus.</title>
        <authorList>
            <person name="Kettler G.C."/>
            <person name="Martiny A.C."/>
            <person name="Huang K."/>
            <person name="Zucker J."/>
            <person name="Coleman M.L."/>
            <person name="Rodrigue S."/>
            <person name="Chen F."/>
            <person name="Lapidus A."/>
            <person name="Ferriera S."/>
            <person name="Johnson J."/>
            <person name="Steglich C."/>
            <person name="Church G.M."/>
            <person name="Richardson P."/>
            <person name="Chisholm S.W."/>
        </authorList>
    </citation>
    <scope>NUCLEOTIDE SEQUENCE [LARGE SCALE GENOMIC DNA]</scope>
    <source>
        <strain>AS9601</strain>
    </source>
</reference>
<keyword id="KW-0067">ATP-binding</keyword>
<keyword id="KW-0963">Cytoplasm</keyword>
<keyword id="KW-0275">Fatty acid biosynthesis</keyword>
<keyword id="KW-0276">Fatty acid metabolism</keyword>
<keyword id="KW-0444">Lipid biosynthesis</keyword>
<keyword id="KW-0443">Lipid metabolism</keyword>
<keyword id="KW-0479">Metal-binding</keyword>
<keyword id="KW-0547">Nucleotide-binding</keyword>
<keyword id="KW-0808">Transferase</keyword>
<keyword id="KW-0862">Zinc</keyword>
<keyword id="KW-0863">Zinc-finger</keyword>
<evidence type="ECO:0000255" key="1">
    <source>
        <dbReference type="HAMAP-Rule" id="MF_01395"/>
    </source>
</evidence>
<evidence type="ECO:0000255" key="2">
    <source>
        <dbReference type="PROSITE-ProRule" id="PRU01136"/>
    </source>
</evidence>
<comment type="function">
    <text evidence="1">Component of the acetyl coenzyme A carboxylase (ACC) complex. Biotin carboxylase (BC) catalyzes the carboxylation of biotin on its carrier protein (BCCP) and then the CO(2) group is transferred by the transcarboxylase to acetyl-CoA to form malonyl-CoA.</text>
</comment>
<comment type="catalytic activity">
    <reaction evidence="1">
        <text>N(6)-carboxybiotinyl-L-lysyl-[protein] + acetyl-CoA = N(6)-biotinyl-L-lysyl-[protein] + malonyl-CoA</text>
        <dbReference type="Rhea" id="RHEA:54728"/>
        <dbReference type="Rhea" id="RHEA-COMP:10505"/>
        <dbReference type="Rhea" id="RHEA-COMP:10506"/>
        <dbReference type="ChEBI" id="CHEBI:57288"/>
        <dbReference type="ChEBI" id="CHEBI:57384"/>
        <dbReference type="ChEBI" id="CHEBI:83144"/>
        <dbReference type="ChEBI" id="CHEBI:83145"/>
        <dbReference type="EC" id="2.1.3.15"/>
    </reaction>
</comment>
<comment type="cofactor">
    <cofactor evidence="1">
        <name>Zn(2+)</name>
        <dbReference type="ChEBI" id="CHEBI:29105"/>
    </cofactor>
    <text evidence="1">Binds 1 zinc ion per subunit.</text>
</comment>
<comment type="pathway">
    <text evidence="1">Lipid metabolism; malonyl-CoA biosynthesis; malonyl-CoA from acetyl-CoA: step 1/1.</text>
</comment>
<comment type="subunit">
    <text evidence="1">Acetyl-CoA carboxylase is a heterohexamer composed of biotin carboxyl carrier protein (AccB), biotin carboxylase (AccC) and two subunits each of ACCase subunit alpha (AccA) and ACCase subunit beta (AccD).</text>
</comment>
<comment type="subcellular location">
    <subcellularLocation>
        <location evidence="1">Cytoplasm</location>
    </subcellularLocation>
</comment>
<comment type="similarity">
    <text evidence="1">Belongs to the AccD/PCCB family.</text>
</comment>